<evidence type="ECO:0000255" key="1">
    <source>
        <dbReference type="HAMAP-Rule" id="MF_00736"/>
    </source>
</evidence>
<evidence type="ECO:0000305" key="2"/>
<gene>
    <name evidence="1" type="primary">rplK</name>
    <name type="ordered locus">RSc3038</name>
    <name type="ORF">RS04747</name>
</gene>
<reference key="1">
    <citation type="journal article" date="2002" name="Nature">
        <title>Genome sequence of the plant pathogen Ralstonia solanacearum.</title>
        <authorList>
            <person name="Salanoubat M."/>
            <person name="Genin S."/>
            <person name="Artiguenave F."/>
            <person name="Gouzy J."/>
            <person name="Mangenot S."/>
            <person name="Arlat M."/>
            <person name="Billault A."/>
            <person name="Brottier P."/>
            <person name="Camus J.-C."/>
            <person name="Cattolico L."/>
            <person name="Chandler M."/>
            <person name="Choisne N."/>
            <person name="Claudel-Renard C."/>
            <person name="Cunnac S."/>
            <person name="Demange N."/>
            <person name="Gaspin C."/>
            <person name="Lavie M."/>
            <person name="Moisan A."/>
            <person name="Robert C."/>
            <person name="Saurin W."/>
            <person name="Schiex T."/>
            <person name="Siguier P."/>
            <person name="Thebault P."/>
            <person name="Whalen M."/>
            <person name="Wincker P."/>
            <person name="Levy M."/>
            <person name="Weissenbach J."/>
            <person name="Boucher C.A."/>
        </authorList>
    </citation>
    <scope>NUCLEOTIDE SEQUENCE [LARGE SCALE GENOMIC DNA]</scope>
    <source>
        <strain>ATCC BAA-1114 / GMI1000</strain>
    </source>
</reference>
<sequence length="143" mass="14809">MAKKIIGFIKLQIPAGKANPSPPVGPALGQRGLNIMEFCKAFNAQTQGMEPGLPVPVVITAFADKSFTFVMKSPPATVLIKKAAGVQKGSAKPHTDKVGKITRAQAEEIAKAKNADLTAADLDAAVRTIAGSARSMGITVEGL</sequence>
<proteinExistence type="inferred from homology"/>
<organism>
    <name type="scientific">Ralstonia nicotianae (strain ATCC BAA-1114 / GMI1000)</name>
    <name type="common">Ralstonia solanacearum</name>
    <dbReference type="NCBI Taxonomy" id="267608"/>
    <lineage>
        <taxon>Bacteria</taxon>
        <taxon>Pseudomonadati</taxon>
        <taxon>Pseudomonadota</taxon>
        <taxon>Betaproteobacteria</taxon>
        <taxon>Burkholderiales</taxon>
        <taxon>Burkholderiaceae</taxon>
        <taxon>Ralstonia</taxon>
        <taxon>Ralstonia solanacearum species complex</taxon>
    </lineage>
</organism>
<name>RL11_RALN1</name>
<feature type="chain" id="PRO_0000104346" description="Large ribosomal subunit protein uL11">
    <location>
        <begin position="1"/>
        <end position="143"/>
    </location>
</feature>
<comment type="function">
    <text evidence="1">Forms part of the ribosomal stalk which helps the ribosome interact with GTP-bound translation factors.</text>
</comment>
<comment type="subunit">
    <text evidence="1">Part of the ribosomal stalk of the 50S ribosomal subunit. Interacts with L10 and the large rRNA to form the base of the stalk. L10 forms an elongated spine to which L12 dimers bind in a sequential fashion forming a multimeric L10(L12)X complex.</text>
</comment>
<comment type="PTM">
    <text evidence="1">One or more lysine residues are methylated.</text>
</comment>
<comment type="similarity">
    <text evidence="1">Belongs to the universal ribosomal protein uL11 family.</text>
</comment>
<accession>Q8XUZ4</accession>
<keyword id="KW-0488">Methylation</keyword>
<keyword id="KW-1185">Reference proteome</keyword>
<keyword id="KW-0687">Ribonucleoprotein</keyword>
<keyword id="KW-0689">Ribosomal protein</keyword>
<keyword id="KW-0694">RNA-binding</keyword>
<keyword id="KW-0699">rRNA-binding</keyword>
<dbReference type="EMBL" id="AL646052">
    <property type="protein sequence ID" value="CAD16747.1"/>
    <property type="molecule type" value="Genomic_DNA"/>
</dbReference>
<dbReference type="RefSeq" id="WP_011002933.1">
    <property type="nucleotide sequence ID" value="NC_003295.1"/>
</dbReference>
<dbReference type="SMR" id="Q8XUZ4"/>
<dbReference type="STRING" id="267608.RSc3038"/>
<dbReference type="EnsemblBacteria" id="CAD16747">
    <property type="protein sequence ID" value="CAD16747"/>
    <property type="gene ID" value="RSc3038"/>
</dbReference>
<dbReference type="GeneID" id="93851160"/>
<dbReference type="KEGG" id="rso:RSc3038"/>
<dbReference type="eggNOG" id="COG0080">
    <property type="taxonomic scope" value="Bacteria"/>
</dbReference>
<dbReference type="HOGENOM" id="CLU_074237_2_0_4"/>
<dbReference type="Proteomes" id="UP000001436">
    <property type="component" value="Chromosome"/>
</dbReference>
<dbReference type="GO" id="GO:0022625">
    <property type="term" value="C:cytosolic large ribosomal subunit"/>
    <property type="evidence" value="ECO:0007669"/>
    <property type="project" value="TreeGrafter"/>
</dbReference>
<dbReference type="GO" id="GO:0070180">
    <property type="term" value="F:large ribosomal subunit rRNA binding"/>
    <property type="evidence" value="ECO:0007669"/>
    <property type="project" value="UniProtKB-UniRule"/>
</dbReference>
<dbReference type="GO" id="GO:0003735">
    <property type="term" value="F:structural constituent of ribosome"/>
    <property type="evidence" value="ECO:0007669"/>
    <property type="project" value="InterPro"/>
</dbReference>
<dbReference type="GO" id="GO:0006412">
    <property type="term" value="P:translation"/>
    <property type="evidence" value="ECO:0007669"/>
    <property type="project" value="UniProtKB-UniRule"/>
</dbReference>
<dbReference type="CDD" id="cd00349">
    <property type="entry name" value="Ribosomal_L11"/>
    <property type="match status" value="1"/>
</dbReference>
<dbReference type="FunFam" id="1.10.10.250:FF:000001">
    <property type="entry name" value="50S ribosomal protein L11"/>
    <property type="match status" value="1"/>
</dbReference>
<dbReference type="FunFam" id="3.30.1550.10:FF:000001">
    <property type="entry name" value="50S ribosomal protein L11"/>
    <property type="match status" value="1"/>
</dbReference>
<dbReference type="Gene3D" id="1.10.10.250">
    <property type="entry name" value="Ribosomal protein L11, C-terminal domain"/>
    <property type="match status" value="1"/>
</dbReference>
<dbReference type="Gene3D" id="3.30.1550.10">
    <property type="entry name" value="Ribosomal protein L11/L12, N-terminal domain"/>
    <property type="match status" value="1"/>
</dbReference>
<dbReference type="HAMAP" id="MF_00736">
    <property type="entry name" value="Ribosomal_uL11"/>
    <property type="match status" value="1"/>
</dbReference>
<dbReference type="InterPro" id="IPR000911">
    <property type="entry name" value="Ribosomal_uL11"/>
</dbReference>
<dbReference type="InterPro" id="IPR006519">
    <property type="entry name" value="Ribosomal_uL11_bac-typ"/>
</dbReference>
<dbReference type="InterPro" id="IPR020783">
    <property type="entry name" value="Ribosomal_uL11_C"/>
</dbReference>
<dbReference type="InterPro" id="IPR036769">
    <property type="entry name" value="Ribosomal_uL11_C_sf"/>
</dbReference>
<dbReference type="InterPro" id="IPR020785">
    <property type="entry name" value="Ribosomal_uL11_CS"/>
</dbReference>
<dbReference type="InterPro" id="IPR020784">
    <property type="entry name" value="Ribosomal_uL11_N"/>
</dbReference>
<dbReference type="InterPro" id="IPR036796">
    <property type="entry name" value="Ribosomal_uL11_N_sf"/>
</dbReference>
<dbReference type="NCBIfam" id="TIGR01632">
    <property type="entry name" value="L11_bact"/>
    <property type="match status" value="1"/>
</dbReference>
<dbReference type="PANTHER" id="PTHR11661">
    <property type="entry name" value="60S RIBOSOMAL PROTEIN L12"/>
    <property type="match status" value="1"/>
</dbReference>
<dbReference type="PANTHER" id="PTHR11661:SF1">
    <property type="entry name" value="LARGE RIBOSOMAL SUBUNIT PROTEIN UL11M"/>
    <property type="match status" value="1"/>
</dbReference>
<dbReference type="Pfam" id="PF00298">
    <property type="entry name" value="Ribosomal_L11"/>
    <property type="match status" value="1"/>
</dbReference>
<dbReference type="Pfam" id="PF03946">
    <property type="entry name" value="Ribosomal_L11_N"/>
    <property type="match status" value="1"/>
</dbReference>
<dbReference type="SMART" id="SM00649">
    <property type="entry name" value="RL11"/>
    <property type="match status" value="1"/>
</dbReference>
<dbReference type="SUPFAM" id="SSF54747">
    <property type="entry name" value="Ribosomal L11/L12e N-terminal domain"/>
    <property type="match status" value="1"/>
</dbReference>
<dbReference type="SUPFAM" id="SSF46906">
    <property type="entry name" value="Ribosomal protein L11, C-terminal domain"/>
    <property type="match status" value="1"/>
</dbReference>
<dbReference type="PROSITE" id="PS00359">
    <property type="entry name" value="RIBOSOMAL_L11"/>
    <property type="match status" value="1"/>
</dbReference>
<protein>
    <recommendedName>
        <fullName evidence="1">Large ribosomal subunit protein uL11</fullName>
    </recommendedName>
    <alternativeName>
        <fullName evidence="2">50S ribosomal protein L11</fullName>
    </alternativeName>
</protein>